<sequence length="59" mass="6790">MAVPKRKTSPSRRGMRRSADALKAPTYVEDKNSGELRRPHHIDLKSGMYRGRQVLEPKE</sequence>
<accession>P66206</accession>
<accession>G0K7B4</accession>
<accession>Q8YJ14</accession>
<protein>
    <recommendedName>
        <fullName evidence="1">Large ribosomal subunit protein bL32</fullName>
    </recommendedName>
    <alternativeName>
        <fullName evidence="3">50S ribosomal protein L32</fullName>
    </alternativeName>
</protein>
<dbReference type="EMBL" id="AE014291">
    <property type="protein sequence ID" value="AAN30673.1"/>
    <property type="molecule type" value="Genomic_DNA"/>
</dbReference>
<dbReference type="EMBL" id="CP002997">
    <property type="protein sequence ID" value="AEM19090.1"/>
    <property type="molecule type" value="Genomic_DNA"/>
</dbReference>
<dbReference type="RefSeq" id="WP_002964856.1">
    <property type="nucleotide sequence ID" value="NZ_KN046804.1"/>
</dbReference>
<dbReference type="SMR" id="P66206"/>
<dbReference type="GeneID" id="97533091"/>
<dbReference type="KEGG" id="bms:BR1775"/>
<dbReference type="KEGG" id="bsi:BS1330_I1769"/>
<dbReference type="PATRIC" id="fig|204722.21.peg.1212"/>
<dbReference type="HOGENOM" id="CLU_129084_2_2_5"/>
<dbReference type="Proteomes" id="UP000007104">
    <property type="component" value="Chromosome I"/>
</dbReference>
<dbReference type="GO" id="GO:0015934">
    <property type="term" value="C:large ribosomal subunit"/>
    <property type="evidence" value="ECO:0007669"/>
    <property type="project" value="InterPro"/>
</dbReference>
<dbReference type="GO" id="GO:0003735">
    <property type="term" value="F:structural constituent of ribosome"/>
    <property type="evidence" value="ECO:0007669"/>
    <property type="project" value="InterPro"/>
</dbReference>
<dbReference type="GO" id="GO:0006412">
    <property type="term" value="P:translation"/>
    <property type="evidence" value="ECO:0007669"/>
    <property type="project" value="UniProtKB-UniRule"/>
</dbReference>
<dbReference type="Gene3D" id="1.20.5.640">
    <property type="entry name" value="Single helix bin"/>
    <property type="match status" value="1"/>
</dbReference>
<dbReference type="HAMAP" id="MF_00340">
    <property type="entry name" value="Ribosomal_bL32"/>
    <property type="match status" value="1"/>
</dbReference>
<dbReference type="InterPro" id="IPR002677">
    <property type="entry name" value="Ribosomal_bL32"/>
</dbReference>
<dbReference type="InterPro" id="IPR044957">
    <property type="entry name" value="Ribosomal_bL32_bact"/>
</dbReference>
<dbReference type="InterPro" id="IPR011332">
    <property type="entry name" value="Ribosomal_zn-bd"/>
</dbReference>
<dbReference type="NCBIfam" id="TIGR01031">
    <property type="entry name" value="rpmF_bact"/>
    <property type="match status" value="1"/>
</dbReference>
<dbReference type="PANTHER" id="PTHR35534">
    <property type="entry name" value="50S RIBOSOMAL PROTEIN L32"/>
    <property type="match status" value="1"/>
</dbReference>
<dbReference type="PANTHER" id="PTHR35534:SF1">
    <property type="entry name" value="LARGE RIBOSOMAL SUBUNIT PROTEIN BL32"/>
    <property type="match status" value="1"/>
</dbReference>
<dbReference type="Pfam" id="PF01783">
    <property type="entry name" value="Ribosomal_L32p"/>
    <property type="match status" value="1"/>
</dbReference>
<dbReference type="SUPFAM" id="SSF57829">
    <property type="entry name" value="Zn-binding ribosomal proteins"/>
    <property type="match status" value="1"/>
</dbReference>
<comment type="similarity">
    <text evidence="1">Belongs to the bacterial ribosomal protein bL32 family.</text>
</comment>
<evidence type="ECO:0000255" key="1">
    <source>
        <dbReference type="HAMAP-Rule" id="MF_00340"/>
    </source>
</evidence>
<evidence type="ECO:0000256" key="2">
    <source>
        <dbReference type="SAM" id="MobiDB-lite"/>
    </source>
</evidence>
<evidence type="ECO:0000305" key="3"/>
<feature type="chain" id="PRO_0000172318" description="Large ribosomal subunit protein bL32">
    <location>
        <begin position="1"/>
        <end position="59"/>
    </location>
</feature>
<feature type="region of interest" description="Disordered" evidence="2">
    <location>
        <begin position="1"/>
        <end position="59"/>
    </location>
</feature>
<feature type="compositionally biased region" description="Basic residues" evidence="2">
    <location>
        <begin position="1"/>
        <end position="16"/>
    </location>
</feature>
<feature type="compositionally biased region" description="Basic and acidic residues" evidence="2">
    <location>
        <begin position="28"/>
        <end position="44"/>
    </location>
</feature>
<name>RL32_BRUSU</name>
<reference key="1">
    <citation type="journal article" date="2002" name="Proc. Natl. Acad. Sci. U.S.A.">
        <title>The Brucella suis genome reveals fundamental similarities between animal and plant pathogens and symbionts.</title>
        <authorList>
            <person name="Paulsen I.T."/>
            <person name="Seshadri R."/>
            <person name="Nelson K.E."/>
            <person name="Eisen J.A."/>
            <person name="Heidelberg J.F."/>
            <person name="Read T.D."/>
            <person name="Dodson R.J."/>
            <person name="Umayam L.A."/>
            <person name="Brinkac L.M."/>
            <person name="Beanan M.J."/>
            <person name="Daugherty S.C."/>
            <person name="DeBoy R.T."/>
            <person name="Durkin A.S."/>
            <person name="Kolonay J.F."/>
            <person name="Madupu R."/>
            <person name="Nelson W.C."/>
            <person name="Ayodeji B."/>
            <person name="Kraul M."/>
            <person name="Shetty J."/>
            <person name="Malek J.A."/>
            <person name="Van Aken S.E."/>
            <person name="Riedmuller S."/>
            <person name="Tettelin H."/>
            <person name="Gill S.R."/>
            <person name="White O."/>
            <person name="Salzberg S.L."/>
            <person name="Hoover D.L."/>
            <person name="Lindler L.E."/>
            <person name="Halling S.M."/>
            <person name="Boyle S.M."/>
            <person name="Fraser C.M."/>
        </authorList>
    </citation>
    <scope>NUCLEOTIDE SEQUENCE [LARGE SCALE GENOMIC DNA]</scope>
    <source>
        <strain>1330</strain>
    </source>
</reference>
<reference key="2">
    <citation type="journal article" date="2011" name="J. Bacteriol.">
        <title>Revised genome sequence of Brucella suis 1330.</title>
        <authorList>
            <person name="Tae H."/>
            <person name="Shallom S."/>
            <person name="Settlage R."/>
            <person name="Preston D."/>
            <person name="Adams L.G."/>
            <person name="Garner H.R."/>
        </authorList>
    </citation>
    <scope>NUCLEOTIDE SEQUENCE [LARGE SCALE GENOMIC DNA]</scope>
    <source>
        <strain>1330</strain>
    </source>
</reference>
<keyword id="KW-0687">Ribonucleoprotein</keyword>
<keyword id="KW-0689">Ribosomal protein</keyword>
<organism>
    <name type="scientific">Brucella suis biovar 1 (strain 1330)</name>
    <dbReference type="NCBI Taxonomy" id="204722"/>
    <lineage>
        <taxon>Bacteria</taxon>
        <taxon>Pseudomonadati</taxon>
        <taxon>Pseudomonadota</taxon>
        <taxon>Alphaproteobacteria</taxon>
        <taxon>Hyphomicrobiales</taxon>
        <taxon>Brucellaceae</taxon>
        <taxon>Brucella/Ochrobactrum group</taxon>
        <taxon>Brucella</taxon>
    </lineage>
</organism>
<proteinExistence type="inferred from homology"/>
<gene>
    <name evidence="1" type="primary">rpmF</name>
    <name type="ordered locus">BR1775</name>
    <name type="ordered locus">BS1330_I1769</name>
</gene>